<keyword id="KW-0687">Ribonucleoprotein</keyword>
<keyword id="KW-0689">Ribosomal protein</keyword>
<keyword id="KW-0694">RNA-binding</keyword>
<keyword id="KW-0699">rRNA-binding</keyword>
<evidence type="ECO:0000255" key="1">
    <source>
        <dbReference type="HAMAP-Rule" id="MF_00500"/>
    </source>
</evidence>
<evidence type="ECO:0000305" key="2"/>
<name>RS20_STRPF</name>
<accession>Q1J6D8</accession>
<dbReference type="EMBL" id="CP000262">
    <property type="protein sequence ID" value="ABF38045.1"/>
    <property type="molecule type" value="Genomic_DNA"/>
</dbReference>
<dbReference type="SMR" id="Q1J6D8"/>
<dbReference type="KEGG" id="spi:MGAS10750_Spy1095"/>
<dbReference type="HOGENOM" id="CLU_160655_1_1_9"/>
<dbReference type="Proteomes" id="UP000002434">
    <property type="component" value="Chromosome"/>
</dbReference>
<dbReference type="GO" id="GO:0005829">
    <property type="term" value="C:cytosol"/>
    <property type="evidence" value="ECO:0007669"/>
    <property type="project" value="TreeGrafter"/>
</dbReference>
<dbReference type="GO" id="GO:0015935">
    <property type="term" value="C:small ribosomal subunit"/>
    <property type="evidence" value="ECO:0007669"/>
    <property type="project" value="TreeGrafter"/>
</dbReference>
<dbReference type="GO" id="GO:0070181">
    <property type="term" value="F:small ribosomal subunit rRNA binding"/>
    <property type="evidence" value="ECO:0007669"/>
    <property type="project" value="TreeGrafter"/>
</dbReference>
<dbReference type="GO" id="GO:0003735">
    <property type="term" value="F:structural constituent of ribosome"/>
    <property type="evidence" value="ECO:0007669"/>
    <property type="project" value="InterPro"/>
</dbReference>
<dbReference type="GO" id="GO:0006412">
    <property type="term" value="P:translation"/>
    <property type="evidence" value="ECO:0007669"/>
    <property type="project" value="UniProtKB-UniRule"/>
</dbReference>
<dbReference type="FunFam" id="1.20.58.110:FF:000001">
    <property type="entry name" value="30S ribosomal protein S20"/>
    <property type="match status" value="1"/>
</dbReference>
<dbReference type="Gene3D" id="1.20.58.110">
    <property type="entry name" value="Ribosomal protein S20"/>
    <property type="match status" value="1"/>
</dbReference>
<dbReference type="HAMAP" id="MF_00500">
    <property type="entry name" value="Ribosomal_bS20"/>
    <property type="match status" value="1"/>
</dbReference>
<dbReference type="InterPro" id="IPR002583">
    <property type="entry name" value="Ribosomal_bS20"/>
</dbReference>
<dbReference type="InterPro" id="IPR036510">
    <property type="entry name" value="Ribosomal_bS20_sf"/>
</dbReference>
<dbReference type="NCBIfam" id="TIGR00029">
    <property type="entry name" value="S20"/>
    <property type="match status" value="1"/>
</dbReference>
<dbReference type="PANTHER" id="PTHR33398">
    <property type="entry name" value="30S RIBOSOMAL PROTEIN S20"/>
    <property type="match status" value="1"/>
</dbReference>
<dbReference type="PANTHER" id="PTHR33398:SF1">
    <property type="entry name" value="SMALL RIBOSOMAL SUBUNIT PROTEIN BS20C"/>
    <property type="match status" value="1"/>
</dbReference>
<dbReference type="Pfam" id="PF01649">
    <property type="entry name" value="Ribosomal_S20p"/>
    <property type="match status" value="1"/>
</dbReference>
<dbReference type="SUPFAM" id="SSF46992">
    <property type="entry name" value="Ribosomal protein S20"/>
    <property type="match status" value="1"/>
</dbReference>
<proteinExistence type="inferred from homology"/>
<reference key="1">
    <citation type="journal article" date="2006" name="Proc. Natl. Acad. Sci. U.S.A.">
        <title>Molecular genetic anatomy of inter- and intraserotype variation in the human bacterial pathogen group A Streptococcus.</title>
        <authorList>
            <person name="Beres S.B."/>
            <person name="Richter E.W."/>
            <person name="Nagiec M.J."/>
            <person name="Sumby P."/>
            <person name="Porcella S.F."/>
            <person name="DeLeo F.R."/>
            <person name="Musser J.M."/>
        </authorList>
    </citation>
    <scope>NUCLEOTIDE SEQUENCE [LARGE SCALE GENOMIC DNA]</scope>
    <source>
        <strain>MGAS10750</strain>
    </source>
</reference>
<organism>
    <name type="scientific">Streptococcus pyogenes serotype M4 (strain MGAS10750)</name>
    <dbReference type="NCBI Taxonomy" id="370554"/>
    <lineage>
        <taxon>Bacteria</taxon>
        <taxon>Bacillati</taxon>
        <taxon>Bacillota</taxon>
        <taxon>Bacilli</taxon>
        <taxon>Lactobacillales</taxon>
        <taxon>Streptococcaceae</taxon>
        <taxon>Streptococcus</taxon>
    </lineage>
</organism>
<gene>
    <name evidence="1" type="primary">rpsT</name>
    <name type="ordered locus">MGAS10750_Spy1095</name>
</gene>
<protein>
    <recommendedName>
        <fullName evidence="1">Small ribosomal subunit protein bS20</fullName>
    </recommendedName>
    <alternativeName>
        <fullName evidence="2">30S ribosomal protein S20</fullName>
    </alternativeName>
</protein>
<comment type="function">
    <text evidence="1">Binds directly to 16S ribosomal RNA.</text>
</comment>
<comment type="similarity">
    <text evidence="1">Belongs to the bacterial ribosomal protein bS20 family.</text>
</comment>
<feature type="chain" id="PRO_0000260149" description="Small ribosomal subunit protein bS20">
    <location>
        <begin position="1"/>
        <end position="82"/>
    </location>
</feature>
<sequence length="82" mass="8883">MEVKTLANIKSAIKRAELNVKANEKNSAQKSAMRTAIKAFEANPSEELFRAASSSIDKAESKGLIHKNKASRDKARLAAKLG</sequence>